<feature type="chain" id="PRO_0000128237" description="Pantothenate synthetase">
    <location>
        <begin position="1"/>
        <end position="281"/>
    </location>
</feature>
<feature type="active site" description="Proton donor" evidence="1">
    <location>
        <position position="33"/>
    </location>
</feature>
<feature type="binding site" evidence="1">
    <location>
        <begin position="26"/>
        <end position="33"/>
    </location>
    <ligand>
        <name>ATP</name>
        <dbReference type="ChEBI" id="CHEBI:30616"/>
    </ligand>
</feature>
<feature type="binding site" evidence="1">
    <location>
        <position position="57"/>
    </location>
    <ligand>
        <name>(R)-pantoate</name>
        <dbReference type="ChEBI" id="CHEBI:15980"/>
    </ligand>
</feature>
<feature type="binding site" evidence="1">
    <location>
        <position position="57"/>
    </location>
    <ligand>
        <name>beta-alanine</name>
        <dbReference type="ChEBI" id="CHEBI:57966"/>
    </ligand>
</feature>
<feature type="binding site" evidence="1">
    <location>
        <begin position="145"/>
        <end position="148"/>
    </location>
    <ligand>
        <name>ATP</name>
        <dbReference type="ChEBI" id="CHEBI:30616"/>
    </ligand>
</feature>
<feature type="binding site" evidence="1">
    <location>
        <position position="151"/>
    </location>
    <ligand>
        <name>(R)-pantoate</name>
        <dbReference type="ChEBI" id="CHEBI:15980"/>
    </ligand>
</feature>
<feature type="binding site" evidence="1">
    <location>
        <begin position="182"/>
        <end position="185"/>
    </location>
    <ligand>
        <name>ATP</name>
        <dbReference type="ChEBI" id="CHEBI:30616"/>
    </ligand>
</feature>
<sequence>MRILKSLAELRRWRQQQSEVALVPTMGNLHDGHLQLVKTALERCDNVVVSIFVNPMQFGANEDLDSYPRTLEADCQALDALGVSAVFTPQVNDVYPRGLDKQTRIEVPGISDILCGASRPGHFTGVATIVCKLFNMVQPQLAVFGEKDYQQLQVIRLMVQDLSLPVEVLGTATQRETSGLAMSSRNGYLSTEQKHQAAELYKTLEETKAKLSVNTDFGELEAAAKEKLTQAGFVPDYFSIRNAADLQEATPEDHEWVILAAAFMGKTRLIDNLRVTNAAAK</sequence>
<protein>
    <recommendedName>
        <fullName evidence="1">Pantothenate synthetase</fullName>
        <shortName evidence="1">PS</shortName>
        <ecNumber evidence="1">6.3.2.1</ecNumber>
    </recommendedName>
    <alternativeName>
        <fullName evidence="1">Pantoate--beta-alanine ligase</fullName>
    </alternativeName>
    <alternativeName>
        <fullName evidence="1">Pantoate-activating enzyme</fullName>
    </alternativeName>
</protein>
<dbReference type="EC" id="6.3.2.1" evidence="1"/>
<dbReference type="EMBL" id="AE017340">
    <property type="protein sequence ID" value="AAV83087.1"/>
    <property type="molecule type" value="Genomic_DNA"/>
</dbReference>
<dbReference type="RefSeq" id="WP_011235482.1">
    <property type="nucleotide sequence ID" value="NC_006512.1"/>
</dbReference>
<dbReference type="SMR" id="Q5QVR4"/>
<dbReference type="STRING" id="283942.IL2255"/>
<dbReference type="GeneID" id="41337444"/>
<dbReference type="KEGG" id="ilo:IL2255"/>
<dbReference type="eggNOG" id="COG0414">
    <property type="taxonomic scope" value="Bacteria"/>
</dbReference>
<dbReference type="HOGENOM" id="CLU_047148_0_0_6"/>
<dbReference type="OrthoDB" id="9773087at2"/>
<dbReference type="UniPathway" id="UPA00028">
    <property type="reaction ID" value="UER00005"/>
</dbReference>
<dbReference type="Proteomes" id="UP000001171">
    <property type="component" value="Chromosome"/>
</dbReference>
<dbReference type="GO" id="GO:0005829">
    <property type="term" value="C:cytosol"/>
    <property type="evidence" value="ECO:0007669"/>
    <property type="project" value="TreeGrafter"/>
</dbReference>
<dbReference type="GO" id="GO:0005524">
    <property type="term" value="F:ATP binding"/>
    <property type="evidence" value="ECO:0007669"/>
    <property type="project" value="UniProtKB-KW"/>
</dbReference>
<dbReference type="GO" id="GO:0004592">
    <property type="term" value="F:pantoate-beta-alanine ligase activity"/>
    <property type="evidence" value="ECO:0007669"/>
    <property type="project" value="UniProtKB-UniRule"/>
</dbReference>
<dbReference type="GO" id="GO:0015940">
    <property type="term" value="P:pantothenate biosynthetic process"/>
    <property type="evidence" value="ECO:0007669"/>
    <property type="project" value="UniProtKB-UniRule"/>
</dbReference>
<dbReference type="CDD" id="cd00560">
    <property type="entry name" value="PanC"/>
    <property type="match status" value="1"/>
</dbReference>
<dbReference type="FunFam" id="3.40.50.620:FF:000013">
    <property type="entry name" value="Pantothenate synthetase"/>
    <property type="match status" value="1"/>
</dbReference>
<dbReference type="Gene3D" id="3.40.50.620">
    <property type="entry name" value="HUPs"/>
    <property type="match status" value="1"/>
</dbReference>
<dbReference type="Gene3D" id="3.30.1300.10">
    <property type="entry name" value="Pantoate-beta-alanine ligase, C-terminal domain"/>
    <property type="match status" value="1"/>
</dbReference>
<dbReference type="HAMAP" id="MF_00158">
    <property type="entry name" value="PanC"/>
    <property type="match status" value="1"/>
</dbReference>
<dbReference type="InterPro" id="IPR004821">
    <property type="entry name" value="Cyt_trans-like"/>
</dbReference>
<dbReference type="InterPro" id="IPR003721">
    <property type="entry name" value="Pantoate_ligase"/>
</dbReference>
<dbReference type="InterPro" id="IPR042176">
    <property type="entry name" value="Pantoate_ligase_C"/>
</dbReference>
<dbReference type="InterPro" id="IPR014729">
    <property type="entry name" value="Rossmann-like_a/b/a_fold"/>
</dbReference>
<dbReference type="NCBIfam" id="TIGR00125">
    <property type="entry name" value="cyt_tran_rel"/>
    <property type="match status" value="1"/>
</dbReference>
<dbReference type="NCBIfam" id="TIGR00018">
    <property type="entry name" value="panC"/>
    <property type="match status" value="1"/>
</dbReference>
<dbReference type="PANTHER" id="PTHR21299">
    <property type="entry name" value="CYTIDYLATE KINASE/PANTOATE-BETA-ALANINE LIGASE"/>
    <property type="match status" value="1"/>
</dbReference>
<dbReference type="PANTHER" id="PTHR21299:SF1">
    <property type="entry name" value="PANTOATE--BETA-ALANINE LIGASE"/>
    <property type="match status" value="1"/>
</dbReference>
<dbReference type="Pfam" id="PF02569">
    <property type="entry name" value="Pantoate_ligase"/>
    <property type="match status" value="1"/>
</dbReference>
<dbReference type="SUPFAM" id="SSF52374">
    <property type="entry name" value="Nucleotidylyl transferase"/>
    <property type="match status" value="1"/>
</dbReference>
<accession>Q5QVR4</accession>
<gene>
    <name evidence="1" type="primary">panC</name>
    <name type="ordered locus">IL2255</name>
</gene>
<evidence type="ECO:0000255" key="1">
    <source>
        <dbReference type="HAMAP-Rule" id="MF_00158"/>
    </source>
</evidence>
<reference key="1">
    <citation type="journal article" date="2004" name="Proc. Natl. Acad. Sci. U.S.A.">
        <title>Genome sequence of the deep-sea gamma-proteobacterium Idiomarina loihiensis reveals amino acid fermentation as a source of carbon and energy.</title>
        <authorList>
            <person name="Hou S."/>
            <person name="Saw J.H."/>
            <person name="Lee K.S."/>
            <person name="Freitas T.A."/>
            <person name="Belisle C."/>
            <person name="Kawarabayasi Y."/>
            <person name="Donachie S.P."/>
            <person name="Pikina A."/>
            <person name="Galperin M.Y."/>
            <person name="Koonin E.V."/>
            <person name="Makarova K.S."/>
            <person name="Omelchenko M.V."/>
            <person name="Sorokin A."/>
            <person name="Wolf Y.I."/>
            <person name="Li Q.X."/>
            <person name="Keum Y.S."/>
            <person name="Campbell S."/>
            <person name="Denery J."/>
            <person name="Aizawa S."/>
            <person name="Shibata S."/>
            <person name="Malahoff A."/>
            <person name="Alam M."/>
        </authorList>
    </citation>
    <scope>NUCLEOTIDE SEQUENCE [LARGE SCALE GENOMIC DNA]</scope>
    <source>
        <strain>ATCC BAA-735 / DSM 15497 / L2-TR</strain>
    </source>
</reference>
<name>PANC_IDILO</name>
<organism>
    <name type="scientific">Idiomarina loihiensis (strain ATCC BAA-735 / DSM 15497 / L2-TR)</name>
    <dbReference type="NCBI Taxonomy" id="283942"/>
    <lineage>
        <taxon>Bacteria</taxon>
        <taxon>Pseudomonadati</taxon>
        <taxon>Pseudomonadota</taxon>
        <taxon>Gammaproteobacteria</taxon>
        <taxon>Alteromonadales</taxon>
        <taxon>Idiomarinaceae</taxon>
        <taxon>Idiomarina</taxon>
    </lineage>
</organism>
<comment type="function">
    <text evidence="1">Catalyzes the condensation of pantoate with beta-alanine in an ATP-dependent reaction via a pantoyl-adenylate intermediate.</text>
</comment>
<comment type="catalytic activity">
    <reaction evidence="1">
        <text>(R)-pantoate + beta-alanine + ATP = (R)-pantothenate + AMP + diphosphate + H(+)</text>
        <dbReference type="Rhea" id="RHEA:10912"/>
        <dbReference type="ChEBI" id="CHEBI:15378"/>
        <dbReference type="ChEBI" id="CHEBI:15980"/>
        <dbReference type="ChEBI" id="CHEBI:29032"/>
        <dbReference type="ChEBI" id="CHEBI:30616"/>
        <dbReference type="ChEBI" id="CHEBI:33019"/>
        <dbReference type="ChEBI" id="CHEBI:57966"/>
        <dbReference type="ChEBI" id="CHEBI:456215"/>
        <dbReference type="EC" id="6.3.2.1"/>
    </reaction>
</comment>
<comment type="pathway">
    <text evidence="1">Cofactor biosynthesis; (R)-pantothenate biosynthesis; (R)-pantothenate from (R)-pantoate and beta-alanine: step 1/1.</text>
</comment>
<comment type="subunit">
    <text evidence="1">Homodimer.</text>
</comment>
<comment type="subcellular location">
    <subcellularLocation>
        <location evidence="1">Cytoplasm</location>
    </subcellularLocation>
</comment>
<comment type="miscellaneous">
    <text evidence="1">The reaction proceeds by a bi uni uni bi ping pong mechanism.</text>
</comment>
<comment type="similarity">
    <text evidence="1">Belongs to the pantothenate synthetase family.</text>
</comment>
<proteinExistence type="inferred from homology"/>
<keyword id="KW-0067">ATP-binding</keyword>
<keyword id="KW-0963">Cytoplasm</keyword>
<keyword id="KW-0436">Ligase</keyword>
<keyword id="KW-0547">Nucleotide-binding</keyword>
<keyword id="KW-0566">Pantothenate biosynthesis</keyword>
<keyword id="KW-1185">Reference proteome</keyword>